<dbReference type="EMBL" id="ADZY03000323">
    <property type="protein sequence ID" value="PCK69666.1"/>
    <property type="molecule type" value="Genomic_DNA"/>
</dbReference>
<dbReference type="RefSeq" id="WP_023485062.1">
    <property type="nucleotide sequence ID" value="NZ_ADZY03000323.1"/>
</dbReference>
<dbReference type="SMR" id="A0A2A5JY22"/>
<dbReference type="GO" id="GO:0005886">
    <property type="term" value="C:plasma membrane"/>
    <property type="evidence" value="ECO:0007669"/>
    <property type="project" value="UniProtKB-SubCell"/>
</dbReference>
<dbReference type="GO" id="GO:0042907">
    <property type="term" value="F:xanthine transmembrane transporter activity"/>
    <property type="evidence" value="ECO:0007669"/>
    <property type="project" value="TreeGrafter"/>
</dbReference>
<dbReference type="InterPro" id="IPR006043">
    <property type="entry name" value="NCS2"/>
</dbReference>
<dbReference type="InterPro" id="IPR017588">
    <property type="entry name" value="UacT-like"/>
</dbReference>
<dbReference type="InterPro" id="IPR006042">
    <property type="entry name" value="Xan_ur_permease"/>
</dbReference>
<dbReference type="NCBIfam" id="TIGR00801">
    <property type="entry name" value="ncs2"/>
    <property type="match status" value="1"/>
</dbReference>
<dbReference type="NCBIfam" id="NF037981">
    <property type="entry name" value="NCS2_1"/>
    <property type="match status" value="1"/>
</dbReference>
<dbReference type="NCBIfam" id="TIGR03173">
    <property type="entry name" value="pbuX"/>
    <property type="match status" value="1"/>
</dbReference>
<dbReference type="PANTHER" id="PTHR42810">
    <property type="entry name" value="PURINE PERMEASE C1399.01C-RELATED"/>
    <property type="match status" value="1"/>
</dbReference>
<dbReference type="PANTHER" id="PTHR42810:SF4">
    <property type="entry name" value="URIC ACID TRANSPORTER UACT"/>
    <property type="match status" value="1"/>
</dbReference>
<dbReference type="Pfam" id="PF00860">
    <property type="entry name" value="Xan_ur_permease"/>
    <property type="match status" value="1"/>
</dbReference>
<dbReference type="PROSITE" id="PS01116">
    <property type="entry name" value="XANTH_URACIL_PERMASE"/>
    <property type="match status" value="1"/>
</dbReference>
<sequence length="434" mass="45792">MRKSKVLTLGFQHVLAMYAGAVIVPLIVGSSLKLNAEQLAYLVSIDLLTCGIATLLQVWRNKFFGIGLPVMLGCTFTAVGPMIAIGSEYGMPAIYGSVLASGLFLALFAGFFGKLARFFPPIVTGSVVTIIGITLIPVAVQDMGGGQGSADFGSLSNLALSFGVLLFIILANRFFTGFIRAISILLGLIFGTIAGAFMGKVDIGPLLDASWFHGIHPFYFGFPTFHLPSILTMTLVAIVSVMESTGVFVALGKITEKELTADDLKRGYRSEGLASILGSIMNSFPYTTYSQNVGLIQISKVKSRDVVITAGFILVILGFMPKIAALTLLIPTAVLGGAMIAMFGMVVSSGIKMLGAIDLNNHENLLIIACSVSVGLGVTVAPNLFDHLPDSIKILTSNGIVAGSLTAILMNFLFTVGRKKQDESHASAENVHAA</sequence>
<protein>
    <recommendedName>
        <fullName evidence="3">Nucleobase transporter PlUacP</fullName>
    </recommendedName>
</protein>
<comment type="function">
    <text evidence="2">Uptake of the purines adenine and guanine, and the pyrimidine uracil. Transport is probably proton-dependent.</text>
</comment>
<comment type="activity regulation">
    <text evidence="2">Inhibited by the proton gradient disruptor carbonyl cyanide m-chlorophenylhydrazone (CCCP), but not by the sodium gradient disruptor ouabain. Hypoxanthine, xanthine, cytosine and uric acid act as competitive inhibitors.</text>
</comment>
<comment type="biophysicochemical properties">
    <kinetics>
        <KM evidence="2">7.04 uM for adenine</KM>
    </kinetics>
</comment>
<comment type="subcellular location">
    <subcellularLocation>
        <location evidence="4">Cell membrane</location>
        <topology evidence="1">Multi-pass membrane protein</topology>
    </subcellularLocation>
</comment>
<comment type="similarity">
    <text evidence="4">Belongs to the nucleobase:cation symporter-2 (NCS2) (TC 2.A.40) family.</text>
</comment>
<reference key="1">
    <citation type="journal article" date="2011" name="BMC Genomics">
        <title>Updated genome assembly and annotation of Paenibacillus larvae, the agent of American foulbrood disease of honey bees.</title>
        <authorList>
            <person name="Chan Q.W."/>
            <person name="Cornman R.S."/>
            <person name="Birol I."/>
            <person name="Liao N.Y."/>
            <person name="Chan S.K."/>
            <person name="Docking T.R."/>
            <person name="Jackman S.D."/>
            <person name="Taylor G.A."/>
            <person name="Jones S.J."/>
            <person name="de Graaf D.C."/>
            <person name="Evans J.D."/>
            <person name="Foster L.J."/>
        </authorList>
    </citation>
    <scope>NUCLEOTIDE SEQUENCE [LARGE SCALE GENOMIC DNA]</scope>
    <source>
        <strain>NRRL B-3650 / LMG 16245</strain>
    </source>
</reference>
<reference key="2">
    <citation type="journal article" date="2018" name="FEBS Open Bio">
        <title>The solute transport and binding profile of a novel nucleobase cation symporter 2 from the honeybee pathogen Paenibacillus larvae.</title>
        <authorList>
            <person name="Stoffer-Bittner A.J."/>
            <person name="Alexander C.R."/>
            <person name="Dingman D.W."/>
            <person name="Mourad G.S."/>
            <person name="Schultes N.P."/>
        </authorList>
    </citation>
    <scope>FUNCTION</scope>
    <scope>ACTIVITY REGULATION</scope>
    <scope>BIOPHYSICOCHEMICAL PROPERTIES</scope>
    <source>
        <strain>NRRL B-3650 / LMG 16245</strain>
    </source>
</reference>
<proteinExistence type="evidence at protein level"/>
<evidence type="ECO:0000255" key="1"/>
<evidence type="ECO:0000269" key="2">
    <source>
    </source>
</evidence>
<evidence type="ECO:0000303" key="3">
    <source>
    </source>
</evidence>
<evidence type="ECO:0000305" key="4"/>
<evidence type="ECO:0000312" key="5">
    <source>
        <dbReference type="EMBL" id="PCK69666.1"/>
    </source>
</evidence>
<accession>A0A2A5JY22</accession>
<gene>
    <name evidence="5" type="ORF">PL1_3014</name>
</gene>
<organism>
    <name type="scientific">Paenibacillus larvae subsp. larvae (strain NRRL B-3650 / LMG 16245)</name>
    <dbReference type="NCBI Taxonomy" id="741161"/>
    <lineage>
        <taxon>Bacteria</taxon>
        <taxon>Bacillati</taxon>
        <taxon>Bacillota</taxon>
        <taxon>Bacilli</taxon>
        <taxon>Bacillales</taxon>
        <taxon>Paenibacillaceae</taxon>
        <taxon>Paenibacillus</taxon>
    </lineage>
</organism>
<feature type="chain" id="PRO_0000446237" description="Nucleobase transporter PlUacP">
    <location>
        <begin position="1"/>
        <end position="434"/>
    </location>
</feature>
<feature type="transmembrane region" description="Helical" evidence="1">
    <location>
        <begin position="9"/>
        <end position="29"/>
    </location>
</feature>
<feature type="transmembrane region" description="Helical" evidence="1">
    <location>
        <begin position="39"/>
        <end position="59"/>
    </location>
</feature>
<feature type="transmembrane region" description="Helical" evidence="1">
    <location>
        <begin position="63"/>
        <end position="83"/>
    </location>
</feature>
<feature type="transmembrane region" description="Helical" evidence="1">
    <location>
        <begin position="93"/>
        <end position="113"/>
    </location>
</feature>
<feature type="transmembrane region" description="Helical" evidence="1">
    <location>
        <begin position="118"/>
        <end position="138"/>
    </location>
</feature>
<feature type="transmembrane region" description="Helical" evidence="1">
    <location>
        <begin position="159"/>
        <end position="179"/>
    </location>
</feature>
<feature type="transmembrane region" description="Helical" evidence="1">
    <location>
        <begin position="181"/>
        <end position="201"/>
    </location>
</feature>
<feature type="transmembrane region" description="Helical" evidence="1">
    <location>
        <begin position="218"/>
        <end position="238"/>
    </location>
</feature>
<feature type="transmembrane region" description="Helical" evidence="1">
    <location>
        <begin position="306"/>
        <end position="326"/>
    </location>
</feature>
<feature type="transmembrane region" description="Helical" evidence="1">
    <location>
        <begin position="327"/>
        <end position="347"/>
    </location>
</feature>
<feature type="transmembrane region" description="Helical" evidence="1">
    <location>
        <begin position="365"/>
        <end position="385"/>
    </location>
</feature>
<feature type="transmembrane region" description="Helical" evidence="1">
    <location>
        <begin position="394"/>
        <end position="414"/>
    </location>
</feature>
<name>NUCLP_PAELB</name>
<keyword id="KW-1003">Cell membrane</keyword>
<keyword id="KW-0472">Membrane</keyword>
<keyword id="KW-0812">Transmembrane</keyword>
<keyword id="KW-1133">Transmembrane helix</keyword>
<keyword id="KW-0813">Transport</keyword>